<organism>
    <name type="scientific">Mus musculus</name>
    <name type="common">Mouse</name>
    <dbReference type="NCBI Taxonomy" id="10090"/>
    <lineage>
        <taxon>Eukaryota</taxon>
        <taxon>Metazoa</taxon>
        <taxon>Chordata</taxon>
        <taxon>Craniata</taxon>
        <taxon>Vertebrata</taxon>
        <taxon>Euteleostomi</taxon>
        <taxon>Mammalia</taxon>
        <taxon>Eutheria</taxon>
        <taxon>Euarchontoglires</taxon>
        <taxon>Glires</taxon>
        <taxon>Rodentia</taxon>
        <taxon>Myomorpha</taxon>
        <taxon>Muroidea</taxon>
        <taxon>Muridae</taxon>
        <taxon>Murinae</taxon>
        <taxon>Mus</taxon>
        <taxon>Mus</taxon>
    </lineage>
</organism>
<reference key="1">
    <citation type="journal article" date="2000" name="Gene">
        <title>Molecular cloning of mouse thioredoxin reductases.</title>
        <authorList>
            <person name="Kawai H."/>
            <person name="Ota T."/>
            <person name="Suzuki F."/>
            <person name="Tatsuka M."/>
        </authorList>
    </citation>
    <scope>NUCLEOTIDE SEQUENCE [MRNA] (ISOFORM 2)</scope>
    <scope>SUBCELLULAR LOCATION</scope>
    <source>
        <tissue>Thymus</tissue>
    </source>
</reference>
<reference key="2">
    <citation type="journal article" date="2001" name="J. Biol. Chem.">
        <title>Heterogeneity within animal thioredoxin reductases: evidence for alternative first exon splicing.</title>
        <authorList>
            <person name="Sun Q.-A."/>
            <person name="Zappacosta F."/>
            <person name="Factor V.M."/>
            <person name="Wirth P.J."/>
            <person name="Hatfield D.L."/>
            <person name="Gladyshev V.N."/>
        </authorList>
    </citation>
    <scope>NUCLEOTIDE SEQUENCE [MRNA] (ISOFORM 1)</scope>
    <scope>IDENTIFICATION BY MASS SPECTROMETRY</scope>
</reference>
<reference key="3">
    <citation type="journal article" date="2005" name="Science">
        <title>The transcriptional landscape of the mammalian genome.</title>
        <authorList>
            <person name="Carninci P."/>
            <person name="Kasukawa T."/>
            <person name="Katayama S."/>
            <person name="Gough J."/>
            <person name="Frith M.C."/>
            <person name="Maeda N."/>
            <person name="Oyama R."/>
            <person name="Ravasi T."/>
            <person name="Lenhard B."/>
            <person name="Wells C."/>
            <person name="Kodzius R."/>
            <person name="Shimokawa K."/>
            <person name="Bajic V.B."/>
            <person name="Brenner S.E."/>
            <person name="Batalov S."/>
            <person name="Forrest A.R."/>
            <person name="Zavolan M."/>
            <person name="Davis M.J."/>
            <person name="Wilming L.G."/>
            <person name="Aidinis V."/>
            <person name="Allen J.E."/>
            <person name="Ambesi-Impiombato A."/>
            <person name="Apweiler R."/>
            <person name="Aturaliya R.N."/>
            <person name="Bailey T.L."/>
            <person name="Bansal M."/>
            <person name="Baxter L."/>
            <person name="Beisel K.W."/>
            <person name="Bersano T."/>
            <person name="Bono H."/>
            <person name="Chalk A.M."/>
            <person name="Chiu K.P."/>
            <person name="Choudhary V."/>
            <person name="Christoffels A."/>
            <person name="Clutterbuck D.R."/>
            <person name="Crowe M.L."/>
            <person name="Dalla E."/>
            <person name="Dalrymple B.P."/>
            <person name="de Bono B."/>
            <person name="Della Gatta G."/>
            <person name="di Bernardo D."/>
            <person name="Down T."/>
            <person name="Engstrom P."/>
            <person name="Fagiolini M."/>
            <person name="Faulkner G."/>
            <person name="Fletcher C.F."/>
            <person name="Fukushima T."/>
            <person name="Furuno M."/>
            <person name="Futaki S."/>
            <person name="Gariboldi M."/>
            <person name="Georgii-Hemming P."/>
            <person name="Gingeras T.R."/>
            <person name="Gojobori T."/>
            <person name="Green R.E."/>
            <person name="Gustincich S."/>
            <person name="Harbers M."/>
            <person name="Hayashi Y."/>
            <person name="Hensch T.K."/>
            <person name="Hirokawa N."/>
            <person name="Hill D."/>
            <person name="Huminiecki L."/>
            <person name="Iacono M."/>
            <person name="Ikeo K."/>
            <person name="Iwama A."/>
            <person name="Ishikawa T."/>
            <person name="Jakt M."/>
            <person name="Kanapin A."/>
            <person name="Katoh M."/>
            <person name="Kawasawa Y."/>
            <person name="Kelso J."/>
            <person name="Kitamura H."/>
            <person name="Kitano H."/>
            <person name="Kollias G."/>
            <person name="Krishnan S.P."/>
            <person name="Kruger A."/>
            <person name="Kummerfeld S.K."/>
            <person name="Kurochkin I.V."/>
            <person name="Lareau L.F."/>
            <person name="Lazarevic D."/>
            <person name="Lipovich L."/>
            <person name="Liu J."/>
            <person name="Liuni S."/>
            <person name="McWilliam S."/>
            <person name="Madan Babu M."/>
            <person name="Madera M."/>
            <person name="Marchionni L."/>
            <person name="Matsuda H."/>
            <person name="Matsuzawa S."/>
            <person name="Miki H."/>
            <person name="Mignone F."/>
            <person name="Miyake S."/>
            <person name="Morris K."/>
            <person name="Mottagui-Tabar S."/>
            <person name="Mulder N."/>
            <person name="Nakano N."/>
            <person name="Nakauchi H."/>
            <person name="Ng P."/>
            <person name="Nilsson R."/>
            <person name="Nishiguchi S."/>
            <person name="Nishikawa S."/>
            <person name="Nori F."/>
            <person name="Ohara O."/>
            <person name="Okazaki Y."/>
            <person name="Orlando V."/>
            <person name="Pang K.C."/>
            <person name="Pavan W.J."/>
            <person name="Pavesi G."/>
            <person name="Pesole G."/>
            <person name="Petrovsky N."/>
            <person name="Piazza S."/>
            <person name="Reed J."/>
            <person name="Reid J.F."/>
            <person name="Ring B.Z."/>
            <person name="Ringwald M."/>
            <person name="Rost B."/>
            <person name="Ruan Y."/>
            <person name="Salzberg S.L."/>
            <person name="Sandelin A."/>
            <person name="Schneider C."/>
            <person name="Schoenbach C."/>
            <person name="Sekiguchi K."/>
            <person name="Semple C.A."/>
            <person name="Seno S."/>
            <person name="Sessa L."/>
            <person name="Sheng Y."/>
            <person name="Shibata Y."/>
            <person name="Shimada H."/>
            <person name="Shimada K."/>
            <person name="Silva D."/>
            <person name="Sinclair B."/>
            <person name="Sperling S."/>
            <person name="Stupka E."/>
            <person name="Sugiura K."/>
            <person name="Sultana R."/>
            <person name="Takenaka Y."/>
            <person name="Taki K."/>
            <person name="Tammoja K."/>
            <person name="Tan S.L."/>
            <person name="Tang S."/>
            <person name="Taylor M.S."/>
            <person name="Tegner J."/>
            <person name="Teichmann S.A."/>
            <person name="Ueda H.R."/>
            <person name="van Nimwegen E."/>
            <person name="Verardo R."/>
            <person name="Wei C.L."/>
            <person name="Yagi K."/>
            <person name="Yamanishi H."/>
            <person name="Zabarovsky E."/>
            <person name="Zhu S."/>
            <person name="Zimmer A."/>
            <person name="Hide W."/>
            <person name="Bult C."/>
            <person name="Grimmond S.M."/>
            <person name="Teasdale R.D."/>
            <person name="Liu E.T."/>
            <person name="Brusic V."/>
            <person name="Quackenbush J."/>
            <person name="Wahlestedt C."/>
            <person name="Mattick J.S."/>
            <person name="Hume D.A."/>
            <person name="Kai C."/>
            <person name="Sasaki D."/>
            <person name="Tomaru Y."/>
            <person name="Fukuda S."/>
            <person name="Kanamori-Katayama M."/>
            <person name="Suzuki M."/>
            <person name="Aoki J."/>
            <person name="Arakawa T."/>
            <person name="Iida J."/>
            <person name="Imamura K."/>
            <person name="Itoh M."/>
            <person name="Kato T."/>
            <person name="Kawaji H."/>
            <person name="Kawagashira N."/>
            <person name="Kawashima T."/>
            <person name="Kojima M."/>
            <person name="Kondo S."/>
            <person name="Konno H."/>
            <person name="Nakano K."/>
            <person name="Ninomiya N."/>
            <person name="Nishio T."/>
            <person name="Okada M."/>
            <person name="Plessy C."/>
            <person name="Shibata K."/>
            <person name="Shiraki T."/>
            <person name="Suzuki S."/>
            <person name="Tagami M."/>
            <person name="Waki K."/>
            <person name="Watahiki A."/>
            <person name="Okamura-Oho Y."/>
            <person name="Suzuki H."/>
            <person name="Kawai J."/>
            <person name="Hayashizaki Y."/>
        </authorList>
    </citation>
    <scope>NUCLEOTIDE SEQUENCE [LARGE SCALE MRNA] (ISOFORM 2)</scope>
    <source>
        <strain>C57BL/6J</strain>
        <strain>DBA/2J</strain>
        <tissue>Embryo</tissue>
    </source>
</reference>
<reference key="4">
    <citation type="journal article" date="2004" name="Genome Res.">
        <title>The status, quality, and expansion of the NIH full-length cDNA project: the Mammalian Gene Collection (MGC).</title>
        <authorList>
            <consortium name="The MGC Project Team"/>
        </authorList>
    </citation>
    <scope>NUCLEOTIDE SEQUENCE [LARGE SCALE MRNA] (ISOFORM 2)</scope>
    <source>
        <strain>FVB/N-3</strain>
        <tissue>Mammary tumor</tissue>
    </source>
</reference>
<reference key="5">
    <citation type="journal article" date="2001" name="BMC Genomics">
        <title>Genomic organisation and alternative splicing of mouse and human thioredoxin reductase 1 genes.</title>
        <authorList>
            <person name="Osborne S.A."/>
            <person name="Tonissen K.F."/>
        </authorList>
    </citation>
    <scope>ALTERNATIVE SPLICING (ISOFORMS 1 AND 2)</scope>
</reference>
<reference key="6">
    <citation type="journal article" date="2005" name="Nat. Biotechnol.">
        <title>Immunoaffinity profiling of tyrosine phosphorylation in cancer cells.</title>
        <authorList>
            <person name="Rush J."/>
            <person name="Moritz A."/>
            <person name="Lee K.A."/>
            <person name="Guo A."/>
            <person name="Goss V.L."/>
            <person name="Spek E.J."/>
            <person name="Zhang H."/>
            <person name="Zha X.-M."/>
            <person name="Polakiewicz R.D."/>
            <person name="Comb M.J."/>
        </authorList>
    </citation>
    <scope>PHOSPHORYLATION [LARGE SCALE ANALYSIS] AT TYR-245</scope>
    <scope>IDENTIFICATION BY MASS SPECTROMETRY [LARGE SCALE ANALYSIS]</scope>
</reference>
<reference key="7">
    <citation type="journal article" date="2010" name="Cell">
        <title>A tissue-specific atlas of mouse protein phosphorylation and expression.</title>
        <authorList>
            <person name="Huttlin E.L."/>
            <person name="Jedrychowski M.P."/>
            <person name="Elias J.E."/>
            <person name="Goswami T."/>
            <person name="Rad R."/>
            <person name="Beausoleil S.A."/>
            <person name="Villen J."/>
            <person name="Haas W."/>
            <person name="Sowa M.E."/>
            <person name="Gygi S.P."/>
        </authorList>
    </citation>
    <scope>IDENTIFICATION BY MASS SPECTROMETRY [LARGE SCALE ANALYSIS]</scope>
    <source>
        <tissue>Brain</tissue>
        <tissue>Brown adipose tissue</tissue>
        <tissue>Heart</tissue>
        <tissue>Kidney</tissue>
        <tissue>Liver</tissue>
        <tissue>Lung</tissue>
        <tissue>Pancreas</tissue>
        <tissue>Spleen</tissue>
        <tissue>Testis</tissue>
    </source>
</reference>
<reference key="8">
    <citation type="journal article" date="2013" name="Mol. Cell">
        <title>SIRT5-mediated lysine desuccinylation impacts diverse metabolic pathways.</title>
        <authorList>
            <person name="Park J."/>
            <person name="Chen Y."/>
            <person name="Tishkoff D.X."/>
            <person name="Peng C."/>
            <person name="Tan M."/>
            <person name="Dai L."/>
            <person name="Xie Z."/>
            <person name="Zhang Y."/>
            <person name="Zwaans B.M."/>
            <person name="Skinner M.E."/>
            <person name="Lombard D.B."/>
            <person name="Zhao Y."/>
        </authorList>
    </citation>
    <scope>SUCCINYLATION [LARGE SCALE ANALYSIS] AT LYS-182</scope>
    <scope>IDENTIFICATION BY MASS SPECTROMETRY [LARGE SCALE ANALYSIS]</scope>
    <source>
        <tissue>Embryonic fibroblast</tissue>
    </source>
</reference>
<evidence type="ECO:0000250" key="1"/>
<evidence type="ECO:0000250" key="2">
    <source>
        <dbReference type="UniProtKB" id="O89049"/>
    </source>
</evidence>
<evidence type="ECO:0000250" key="3">
    <source>
        <dbReference type="UniProtKB" id="Q16881"/>
    </source>
</evidence>
<evidence type="ECO:0000256" key="4">
    <source>
        <dbReference type="SAM" id="MobiDB-lite"/>
    </source>
</evidence>
<evidence type="ECO:0000269" key="5">
    <source>
    </source>
</evidence>
<evidence type="ECO:0000303" key="6">
    <source>
    </source>
</evidence>
<evidence type="ECO:0000303" key="7">
    <source>
    </source>
</evidence>
<evidence type="ECO:0000303" key="8">
    <source>
    </source>
</evidence>
<evidence type="ECO:0000305" key="9"/>
<evidence type="ECO:0000312" key="10">
    <source>
        <dbReference type="MGI" id="MGI:1354175"/>
    </source>
</evidence>
<evidence type="ECO:0007744" key="11">
    <source>
    </source>
</evidence>
<evidence type="ECO:0007744" key="12">
    <source>
    </source>
</evidence>
<dbReference type="EC" id="1.8.1.9" evidence="3"/>
<dbReference type="EC" id="1.11.1.2" evidence="3"/>
<dbReference type="EMBL" id="AB027565">
    <property type="protein sequence ID" value="BAA86985.2"/>
    <property type="molecule type" value="mRNA"/>
</dbReference>
<dbReference type="EMBL" id="AF333036">
    <property type="protein sequence ID" value="AAK01140.1"/>
    <property type="molecule type" value="mRNA"/>
</dbReference>
<dbReference type="EMBL" id="AK011902">
    <property type="protein sequence ID" value="BAB27905.1"/>
    <property type="molecule type" value="mRNA"/>
</dbReference>
<dbReference type="EMBL" id="AK146125">
    <property type="protein sequence ID" value="BAE26918.1"/>
    <property type="status" value="ALT_SEQ"/>
    <property type="molecule type" value="mRNA"/>
</dbReference>
<dbReference type="EMBL" id="AK149625">
    <property type="protein sequence ID" value="BAE28994.1"/>
    <property type="molecule type" value="mRNA"/>
</dbReference>
<dbReference type="EMBL" id="AK168356">
    <property type="protein sequence ID" value="BAE40292.1"/>
    <property type="status" value="ALT_SEQ"/>
    <property type="molecule type" value="mRNA"/>
</dbReference>
<dbReference type="EMBL" id="BC037643">
    <property type="protein sequence ID" value="AAH37643.1"/>
    <property type="status" value="ALT_SEQ"/>
    <property type="molecule type" value="mRNA"/>
</dbReference>
<dbReference type="CCDS" id="CCDS24072.1">
    <molecule id="Q9JMH6-2"/>
</dbReference>
<dbReference type="CCDS" id="CCDS88064.1">
    <molecule id="Q9JMH6-1"/>
</dbReference>
<dbReference type="RefSeq" id="NP_001035978.1">
    <molecule id="Q9JMH6-2"/>
    <property type="nucleotide sequence ID" value="NM_001042513.1"/>
</dbReference>
<dbReference type="RefSeq" id="NP_001035979.1">
    <molecule id="Q9JMH6-2"/>
    <property type="nucleotide sequence ID" value="NM_001042514.1"/>
</dbReference>
<dbReference type="RefSeq" id="NP_001035988.1">
    <molecule id="Q9JMH6-1"/>
    <property type="nucleotide sequence ID" value="NM_001042523.1"/>
</dbReference>
<dbReference type="RefSeq" id="NP_056577.2">
    <molecule id="Q9JMH6-2"/>
    <property type="nucleotide sequence ID" value="NM_015762.2"/>
</dbReference>
<dbReference type="BioGRID" id="206041">
    <property type="interactions" value="11"/>
</dbReference>
<dbReference type="FunCoup" id="Q9JMH6">
    <property type="interactions" value="2633"/>
</dbReference>
<dbReference type="IntAct" id="Q9JMH6">
    <property type="interactions" value="1"/>
</dbReference>
<dbReference type="MINT" id="Q9JMH6"/>
<dbReference type="STRING" id="10090.ENSMUSP00000152046"/>
<dbReference type="BindingDB" id="Q9JMH6"/>
<dbReference type="ChEMBL" id="CHEMBL5465360"/>
<dbReference type="GlyGen" id="Q9JMH6">
    <property type="glycosylation" value="4 sites, 1 O-linked glycan (1 site)"/>
</dbReference>
<dbReference type="iPTMnet" id="Q9JMH6"/>
<dbReference type="PhosphoSitePlus" id="Q9JMH6"/>
<dbReference type="SwissPalm" id="Q9JMH6"/>
<dbReference type="REPRODUCTION-2DPAGE" id="Q9JMH6"/>
<dbReference type="jPOST" id="Q9JMH6"/>
<dbReference type="PaxDb" id="10090-ENSMUSP00000020484"/>
<dbReference type="PeptideAtlas" id="Q9JMH6"/>
<dbReference type="ProteomicsDB" id="297528">
    <molecule id="Q9JMH6-1"/>
</dbReference>
<dbReference type="ProteomicsDB" id="297529">
    <molecule id="Q9JMH6-2"/>
</dbReference>
<dbReference type="Pumba" id="Q9JMH6"/>
<dbReference type="Antibodypedia" id="3897">
    <property type="antibodies" value="467 antibodies from 42 providers"/>
</dbReference>
<dbReference type="DNASU" id="50493"/>
<dbReference type="Ensembl" id="ENSMUST00000020484.9">
    <molecule id="Q9JMH6-2"/>
    <property type="protein sequence ID" value="ENSMUSP00000020484.8"/>
    <property type="gene ID" value="ENSMUSG00000020250.12"/>
</dbReference>
<dbReference type="Ensembl" id="ENSMUST00000219368.3">
    <molecule id="Q9JMH6-1"/>
    <property type="protein sequence ID" value="ENSMUSP00000151629.3"/>
    <property type="gene ID" value="ENSMUSG00000020250.12"/>
</dbReference>
<dbReference type="Ensembl" id="ENSMUST00000219442.3">
    <molecule id="Q9JMH6-2"/>
    <property type="protein sequence ID" value="ENSMUSP00000152046.3"/>
    <property type="gene ID" value="ENSMUSG00000020250.12"/>
</dbReference>
<dbReference type="Ensembl" id="ENSMUST00000219962.3">
    <molecule id="Q9JMH6-2"/>
    <property type="protein sequence ID" value="ENSMUSP00000151825.3"/>
    <property type="gene ID" value="ENSMUSG00000020250.12"/>
</dbReference>
<dbReference type="GeneID" id="50493"/>
<dbReference type="KEGG" id="mmu:50493"/>
<dbReference type="UCSC" id="uc007gjy.1">
    <molecule id="Q9JMH6-1"/>
    <property type="organism name" value="mouse"/>
</dbReference>
<dbReference type="AGR" id="MGI:1354175"/>
<dbReference type="CTD" id="7296"/>
<dbReference type="MGI" id="MGI:1354175">
    <property type="gene designation" value="Txnrd1"/>
</dbReference>
<dbReference type="VEuPathDB" id="HostDB:ENSMUSG00000020250"/>
<dbReference type="eggNOG" id="KOG4716">
    <property type="taxonomic scope" value="Eukaryota"/>
</dbReference>
<dbReference type="GeneTree" id="ENSGT00940000160180"/>
<dbReference type="HOGENOM" id="CLU_016755_2_4_1"/>
<dbReference type="InParanoid" id="Q9JMH6"/>
<dbReference type="OMA" id="NYHKLAD"/>
<dbReference type="OrthoDB" id="5956163at2759"/>
<dbReference type="PhylomeDB" id="Q9JMH6"/>
<dbReference type="TreeFam" id="TF314782"/>
<dbReference type="BRENDA" id="1.8.1.9">
    <property type="organism ID" value="3474"/>
</dbReference>
<dbReference type="Reactome" id="R-MMU-3299685">
    <property type="pathway name" value="Detoxification of Reactive Oxygen Species"/>
</dbReference>
<dbReference type="Reactome" id="R-MMU-499943">
    <property type="pathway name" value="Interconversion of nucleotide di- and triphosphates"/>
</dbReference>
<dbReference type="Reactome" id="R-MMU-5263617">
    <property type="pathway name" value="Metabolism of ingested MeSeO2H into MeSeH"/>
</dbReference>
<dbReference type="Reactome" id="R-MMU-5628897">
    <property type="pathway name" value="TP53 Regulates Metabolic Genes"/>
</dbReference>
<dbReference type="SABIO-RK" id="Q9JMH6"/>
<dbReference type="BioGRID-ORCS" id="50493">
    <property type="hits" value="24 hits in 78 CRISPR screens"/>
</dbReference>
<dbReference type="ChiTaRS" id="Txnrd1">
    <property type="organism name" value="mouse"/>
</dbReference>
<dbReference type="PRO" id="PR:Q9JMH6"/>
<dbReference type="Proteomes" id="UP000000589">
    <property type="component" value="Chromosome 10"/>
</dbReference>
<dbReference type="RNAct" id="Q9JMH6">
    <property type="molecule type" value="protein"/>
</dbReference>
<dbReference type="Bgee" id="ENSMUSG00000020250">
    <property type="expression patterns" value="Expressed in somite and 288 other cell types or tissues"/>
</dbReference>
<dbReference type="ExpressionAtlas" id="Q9JMH6">
    <property type="expression patterns" value="baseline and differential"/>
</dbReference>
<dbReference type="GO" id="GO:0005737">
    <property type="term" value="C:cytoplasm"/>
    <property type="evidence" value="ECO:0000314"/>
    <property type="project" value="MGI"/>
</dbReference>
<dbReference type="GO" id="GO:0005829">
    <property type="term" value="C:cytosol"/>
    <property type="evidence" value="ECO:0000314"/>
    <property type="project" value="MGI"/>
</dbReference>
<dbReference type="GO" id="GO:0001650">
    <property type="term" value="C:fibrillar center"/>
    <property type="evidence" value="ECO:0007669"/>
    <property type="project" value="Ensembl"/>
</dbReference>
<dbReference type="GO" id="GO:0005739">
    <property type="term" value="C:mitochondrion"/>
    <property type="evidence" value="ECO:0007005"/>
    <property type="project" value="MGI"/>
</dbReference>
<dbReference type="GO" id="GO:0005654">
    <property type="term" value="C:nucleoplasm"/>
    <property type="evidence" value="ECO:0007669"/>
    <property type="project" value="Ensembl"/>
</dbReference>
<dbReference type="GO" id="GO:0005634">
    <property type="term" value="C:nucleus"/>
    <property type="evidence" value="ECO:0000314"/>
    <property type="project" value="MGI"/>
</dbReference>
<dbReference type="GO" id="GO:0071949">
    <property type="term" value="F:FAD binding"/>
    <property type="evidence" value="ECO:0000250"/>
    <property type="project" value="UniProtKB"/>
</dbReference>
<dbReference type="GO" id="GO:0042802">
    <property type="term" value="F:identical protein binding"/>
    <property type="evidence" value="ECO:0000250"/>
    <property type="project" value="UniProtKB"/>
</dbReference>
<dbReference type="GO" id="GO:0050137">
    <property type="term" value="F:NADPH peroxidase activity"/>
    <property type="evidence" value="ECO:0000250"/>
    <property type="project" value="UniProtKB"/>
</dbReference>
<dbReference type="GO" id="GO:0004791">
    <property type="term" value="F:thioredoxin-disulfide reductase (NADPH) activity"/>
    <property type="evidence" value="ECO:0000314"/>
    <property type="project" value="MGI"/>
</dbReference>
<dbReference type="GO" id="GO:0008283">
    <property type="term" value="P:cell population proliferation"/>
    <property type="evidence" value="ECO:0000315"/>
    <property type="project" value="MGI"/>
</dbReference>
<dbReference type="GO" id="GO:0045454">
    <property type="term" value="P:cell redox homeostasis"/>
    <property type="evidence" value="ECO:0007669"/>
    <property type="project" value="InterPro"/>
</dbReference>
<dbReference type="GO" id="GO:0007369">
    <property type="term" value="P:gastrulation"/>
    <property type="evidence" value="ECO:0000315"/>
    <property type="project" value="MGI"/>
</dbReference>
<dbReference type="GO" id="GO:0001707">
    <property type="term" value="P:mesoderm formation"/>
    <property type="evidence" value="ECO:0000315"/>
    <property type="project" value="MGI"/>
</dbReference>
<dbReference type="FunFam" id="3.50.50.60:FF:000190">
    <property type="entry name" value="Thioredoxin reductase"/>
    <property type="match status" value="1"/>
</dbReference>
<dbReference type="FunFam" id="3.30.390.30:FF:000004">
    <property type="entry name" value="Thioredoxin reductase 1, cytoplasmic"/>
    <property type="match status" value="1"/>
</dbReference>
<dbReference type="Gene3D" id="3.30.390.30">
    <property type="match status" value="1"/>
</dbReference>
<dbReference type="Gene3D" id="3.50.50.60">
    <property type="entry name" value="FAD/NAD(P)-binding domain"/>
    <property type="match status" value="2"/>
</dbReference>
<dbReference type="InterPro" id="IPR036188">
    <property type="entry name" value="FAD/NAD-bd_sf"/>
</dbReference>
<dbReference type="InterPro" id="IPR023753">
    <property type="entry name" value="FAD/NAD-binding_dom"/>
</dbReference>
<dbReference type="InterPro" id="IPR016156">
    <property type="entry name" value="FAD/NAD-linked_Rdtase_dimer_sf"/>
</dbReference>
<dbReference type="InterPro" id="IPR046952">
    <property type="entry name" value="GSHR/TRXR-like"/>
</dbReference>
<dbReference type="InterPro" id="IPR004099">
    <property type="entry name" value="Pyr_nucl-diS_OxRdtase_dimer"/>
</dbReference>
<dbReference type="InterPro" id="IPR012999">
    <property type="entry name" value="Pyr_OxRdtase_I_AS"/>
</dbReference>
<dbReference type="InterPro" id="IPR006338">
    <property type="entry name" value="Thioredoxin/glutathione_Rdtase"/>
</dbReference>
<dbReference type="NCBIfam" id="TIGR01438">
    <property type="entry name" value="TGR"/>
    <property type="match status" value="1"/>
</dbReference>
<dbReference type="PANTHER" id="PTHR42737">
    <property type="entry name" value="GLUTATHIONE REDUCTASE"/>
    <property type="match status" value="1"/>
</dbReference>
<dbReference type="PANTHER" id="PTHR42737:SF8">
    <property type="entry name" value="THIOREDOXIN-DISULFIDE REDUCTASE"/>
    <property type="match status" value="1"/>
</dbReference>
<dbReference type="Pfam" id="PF07992">
    <property type="entry name" value="Pyr_redox_2"/>
    <property type="match status" value="1"/>
</dbReference>
<dbReference type="Pfam" id="PF02852">
    <property type="entry name" value="Pyr_redox_dim"/>
    <property type="match status" value="1"/>
</dbReference>
<dbReference type="PRINTS" id="PR00368">
    <property type="entry name" value="FADPNR"/>
</dbReference>
<dbReference type="PRINTS" id="PR00411">
    <property type="entry name" value="PNDRDTASEI"/>
</dbReference>
<dbReference type="SUPFAM" id="SSF51905">
    <property type="entry name" value="FAD/NAD(P)-binding domain"/>
    <property type="match status" value="1"/>
</dbReference>
<dbReference type="SUPFAM" id="SSF55424">
    <property type="entry name" value="FAD/NAD-linked reductases, dimerisation (C-terminal) domain"/>
    <property type="match status" value="1"/>
</dbReference>
<dbReference type="PROSITE" id="PS00076">
    <property type="entry name" value="PYRIDINE_REDOX_1"/>
    <property type="match status" value="1"/>
</dbReference>
<comment type="function">
    <text evidence="3">Reduces disulfideprotein thioredoxin (Trx) to its dithiol-containing form. Homodimeric flavoprotein involved in the regulation of cellular redox reactions, growth and differentiation. Contains a selenocysteine residue at the C-terminal active site that is essential for catalysis. Also has reductase activity on hydrogen peroxide (H2O2).</text>
</comment>
<comment type="catalytic activity">
    <reaction evidence="3">
        <text>[thioredoxin]-dithiol + NADP(+) = [thioredoxin]-disulfide + NADPH + H(+)</text>
        <dbReference type="Rhea" id="RHEA:20345"/>
        <dbReference type="Rhea" id="RHEA-COMP:10698"/>
        <dbReference type="Rhea" id="RHEA-COMP:10700"/>
        <dbReference type="ChEBI" id="CHEBI:15378"/>
        <dbReference type="ChEBI" id="CHEBI:29950"/>
        <dbReference type="ChEBI" id="CHEBI:50058"/>
        <dbReference type="ChEBI" id="CHEBI:57783"/>
        <dbReference type="ChEBI" id="CHEBI:58349"/>
        <dbReference type="EC" id="1.8.1.9"/>
    </reaction>
    <physiologicalReaction direction="right-to-left" evidence="3">
        <dbReference type="Rhea" id="RHEA:20347"/>
    </physiologicalReaction>
</comment>
<comment type="catalytic activity">
    <reaction evidence="3">
        <text>H2O2 + NADPH + H(+) = NADP(+) + 2 H2O</text>
        <dbReference type="Rhea" id="RHEA:15173"/>
        <dbReference type="ChEBI" id="CHEBI:15377"/>
        <dbReference type="ChEBI" id="CHEBI:15378"/>
        <dbReference type="ChEBI" id="CHEBI:16240"/>
        <dbReference type="ChEBI" id="CHEBI:57783"/>
        <dbReference type="ChEBI" id="CHEBI:58349"/>
        <dbReference type="EC" id="1.11.1.2"/>
    </reaction>
    <physiologicalReaction direction="left-to-right" evidence="3">
        <dbReference type="Rhea" id="RHEA:15174"/>
    </physiologicalReaction>
</comment>
<comment type="cofactor">
    <cofactor evidence="3">
        <name>FAD</name>
        <dbReference type="ChEBI" id="CHEBI:57692"/>
    </cofactor>
    <text evidence="3">Binds 1 FAD per subunit.</text>
</comment>
<comment type="subunit">
    <text evidence="3">Homodimer.</text>
</comment>
<comment type="subcellular location">
    <subcellularLocation>
        <location evidence="5">Cytoplasm</location>
    </subcellularLocation>
</comment>
<comment type="alternative products">
    <event type="alternative splicing"/>
    <isoform>
        <id>Q9JMH6-1</id>
        <name>1</name>
        <sequence type="displayed"/>
    </isoform>
    <isoform>
        <id>Q9JMH6-2</id>
        <name>2</name>
        <sequence type="described" ref="VSP_031566"/>
    </isoform>
</comment>
<comment type="PTM">
    <text evidence="3">ISGylated.</text>
</comment>
<comment type="miscellaneous">
    <text evidence="2">The thioredoxin reductase active site is a redox-active disulfide bond. The selenocysteine residue is also essential for catalytic activity.</text>
</comment>
<comment type="similarity">
    <text evidence="9">Belongs to the class-I pyridine nucleotide-disulfide oxidoreductase family.</text>
</comment>
<comment type="sequence caution" evidence="9">
    <conflict type="erroneous termination">
        <sequence resource="EMBL-CDS" id="AAH37643"/>
    </conflict>
    <text>Truncated C-terminus.</text>
</comment>
<comment type="sequence caution" evidence="9">
    <conflict type="erroneous termination">
        <sequence resource="EMBL-CDS" id="BAE26918"/>
    </conflict>
    <text>Truncated C-terminus.</text>
</comment>
<comment type="sequence caution" evidence="9">
    <conflict type="erroneous termination">
        <sequence resource="EMBL-CDS" id="BAE40292"/>
    </conflict>
    <text>Truncated C-terminus.</text>
</comment>
<keyword id="KW-0025">Alternative splicing</keyword>
<keyword id="KW-0963">Cytoplasm</keyword>
<keyword id="KW-1015">Disulfide bond</keyword>
<keyword id="KW-0274">FAD</keyword>
<keyword id="KW-0285">Flavoprotein</keyword>
<keyword id="KW-0521">NADP</keyword>
<keyword id="KW-0560">Oxidoreductase</keyword>
<keyword id="KW-0597">Phosphoprotein</keyword>
<keyword id="KW-0676">Redox-active center</keyword>
<keyword id="KW-1185">Reference proteome</keyword>
<keyword id="KW-0712">Selenocysteine</keyword>
<keyword id="KW-0832">Ubl conjugation</keyword>
<protein>
    <recommendedName>
        <fullName evidence="9">Thioredoxin reductase 1, cytoplasmic</fullName>
        <shortName>TR</shortName>
        <ecNumber evidence="3">1.8.1.9</ecNumber>
    </recommendedName>
    <alternativeName>
        <fullName evidence="3">Peroxidase TXNRD1</fullName>
        <ecNumber evidence="3">1.11.1.2</ecNumber>
    </alternativeName>
    <alternativeName>
        <fullName>Thioredoxin reductase TR1</fullName>
    </alternativeName>
</protein>
<name>TRXR1_MOUSE</name>
<accession>Q9JMH6</accession>
<accession>Q3UEB7</accession>
<accession>Q3UK84</accession>
<accession>Q8CI31</accession>
<accession>Q99P49</accession>
<accession>Q9CSV5</accession>
<feature type="chain" id="PRO_0000067982" description="Thioredoxin reductase 1, cytoplasmic">
    <location>
        <begin position="1"/>
        <end position="613"/>
    </location>
</feature>
<feature type="region of interest" description="Disordered" evidence="4">
    <location>
        <begin position="58"/>
        <end position="121"/>
    </location>
</feature>
<feature type="compositionally biased region" description="Polar residues" evidence="4">
    <location>
        <begin position="65"/>
        <end position="74"/>
    </location>
</feature>
<feature type="active site" description="Proton acceptor" evidence="1">
    <location>
        <position position="586"/>
    </location>
</feature>
<feature type="binding site" evidence="3">
    <location>
        <begin position="136"/>
        <end position="137"/>
    </location>
    <ligand>
        <name>FAD</name>
        <dbReference type="ChEBI" id="CHEBI:57692"/>
    </ligand>
</feature>
<feature type="binding site" evidence="3">
    <location>
        <begin position="156"/>
        <end position="157"/>
    </location>
    <ligand>
        <name>FAD</name>
        <dbReference type="ChEBI" id="CHEBI:57692"/>
    </ligand>
</feature>
<feature type="binding site" evidence="3">
    <location>
        <begin position="172"/>
        <end position="173"/>
    </location>
    <ligand>
        <name>FAD</name>
        <dbReference type="ChEBI" id="CHEBI:57692"/>
    </ligand>
</feature>
<feature type="binding site" evidence="3">
    <location>
        <begin position="177"/>
        <end position="181"/>
    </location>
    <ligand>
        <name>FAD</name>
        <dbReference type="ChEBI" id="CHEBI:57692"/>
    </ligand>
</feature>
<feature type="binding site" evidence="3">
    <location>
        <begin position="245"/>
        <end position="246"/>
    </location>
    <ligand>
        <name>FAD</name>
        <dbReference type="ChEBI" id="CHEBI:57692"/>
    </ligand>
</feature>
<feature type="binding site" evidence="3">
    <location>
        <position position="275"/>
    </location>
    <ligand>
        <name>FAD</name>
        <dbReference type="ChEBI" id="CHEBI:57692"/>
    </ligand>
</feature>
<feature type="binding site" evidence="3">
    <location>
        <position position="280"/>
    </location>
    <ligand>
        <name>NADP(+)</name>
        <dbReference type="ChEBI" id="CHEBI:58349"/>
    </ligand>
</feature>
<feature type="binding site" evidence="3">
    <location>
        <begin position="312"/>
        <end position="318"/>
    </location>
    <ligand>
        <name>NADP(+)</name>
        <dbReference type="ChEBI" id="CHEBI:58349"/>
    </ligand>
</feature>
<feature type="binding site" evidence="3">
    <location>
        <position position="314"/>
    </location>
    <ligand>
        <name>FAD</name>
        <dbReference type="ChEBI" id="CHEBI:57692"/>
    </ligand>
</feature>
<feature type="binding site" evidence="3">
    <location>
        <begin position="335"/>
        <end position="336"/>
    </location>
    <ligand>
        <name>NADP(+)</name>
        <dbReference type="ChEBI" id="CHEBI:58349"/>
    </ligand>
</feature>
<feature type="binding site" evidence="3">
    <location>
        <begin position="340"/>
        <end position="342"/>
    </location>
    <ligand>
        <name>NADP(+)</name>
        <dbReference type="ChEBI" id="CHEBI:58349"/>
    </ligand>
</feature>
<feature type="binding site" evidence="2">
    <location>
        <position position="340"/>
    </location>
    <ligand>
        <name>NADP(+)</name>
        <dbReference type="ChEBI" id="CHEBI:58349"/>
    </ligand>
</feature>
<feature type="binding site" evidence="3">
    <location>
        <begin position="406"/>
        <end position="407"/>
    </location>
    <ligand>
        <name>NADP(+)</name>
        <dbReference type="ChEBI" id="CHEBI:58349"/>
    </ligand>
</feature>
<feature type="binding site" evidence="3">
    <location>
        <position position="429"/>
    </location>
    <ligand>
        <name>NADP(+)</name>
        <dbReference type="ChEBI" id="CHEBI:58349"/>
    </ligand>
</feature>
<feature type="binding site" evidence="3">
    <location>
        <position position="448"/>
    </location>
    <ligand>
        <name>FAD</name>
        <dbReference type="ChEBI" id="CHEBI:57692"/>
    </ligand>
</feature>
<feature type="binding site" evidence="3">
    <location>
        <begin position="455"/>
        <end position="457"/>
    </location>
    <ligand>
        <name>FAD</name>
        <dbReference type="ChEBI" id="CHEBI:57692"/>
    </ligand>
</feature>
<feature type="binding site" evidence="3">
    <location>
        <position position="455"/>
    </location>
    <ligand>
        <name>NADP(+)</name>
        <dbReference type="ChEBI" id="CHEBI:58349"/>
    </ligand>
</feature>
<feature type="binding site" evidence="3">
    <location>
        <position position="586"/>
    </location>
    <ligand>
        <name>FAD</name>
        <dbReference type="ChEBI" id="CHEBI:57692"/>
    </ligand>
</feature>
<feature type="non-standard amino acid" description="Selenocysteine" evidence="1">
    <location>
        <position position="612"/>
    </location>
</feature>
<feature type="modified residue" description="N6-succinyllysine" evidence="12">
    <location>
        <position position="182"/>
    </location>
</feature>
<feature type="modified residue" description="Phosphotyrosine" evidence="11">
    <location>
        <position position="245"/>
    </location>
</feature>
<feature type="disulfide bond" description="Redox-active" evidence="1">
    <location>
        <begin position="173"/>
        <end position="178"/>
    </location>
</feature>
<feature type="cross-link" description="Cysteinyl-selenocysteine (Cys-Sec)" evidence="1">
    <location>
        <begin position="611"/>
        <end position="612"/>
    </location>
</feature>
<feature type="splice variant" id="VSP_031566" description="In isoform 2." evidence="6 7 8">
    <location>
        <begin position="1"/>
        <end position="114"/>
    </location>
</feature>
<feature type="sequence conflict" description="In Ref. 3; BAE28994." evidence="9" ref="3">
    <original>K</original>
    <variation>E</variation>
    <location>
        <position position="238"/>
    </location>
</feature>
<feature type="sequence conflict" description="In Ref. 3; BAE26918." evidence="9" ref="3">
    <original>Q</original>
    <variation>R</variation>
    <location>
        <position position="372"/>
    </location>
</feature>
<feature type="sequence conflict" description="In Ref. 3; BAE26918." evidence="9" ref="3">
    <original>L</original>
    <variation>V</variation>
    <location>
        <position position="607"/>
    </location>
</feature>
<proteinExistence type="evidence at protein level"/>
<sequence>MPVDDCWLYFPASRGRTFVQTVWVAPTCPNCCWFPGFLPPVPRPPHVPRVLLRGPRGAVLPASRPSKTLPSSSQTPCPTDPCICPPPSTPDSRQEKNTQSELPNKKGQLQKLPTMNGSKDPPGSYDFDLIIIGGGSGGLAAAKEAAKFDKKVLVLDFVTPTPLGTRWGLGGTCVNVGCIPKKLMHQAALLGQALKDSRNYGWKVEDTVKHDWEKMTESVQSHIGSLNWGYRVALREKKVVYENAYGRFIGPHRIVATNNKGKEKIYSAERFLIATGERPRYLGIPGDKEYCISSDDLFSLPYCPGKTLVVGASYVALECAGFLAGIGLDVTVMVRSILLRGFDQDMANKIGEHMEEHGIKFIRQFVPTKIEQIEAGTPGRLRVTAQSTNSEETIEGEFNTVLLAVGRDSCTRTIGLETVGVKINEKTGKIPVTDEEQTNVPYIYAIGDILEGKLELTPVAIQAGRLLAQRLYGGSNVKCDYDNVPTTVFTPLEYGCCGLSEEKAVEKFGEENIEVYHSFFWPLEWTVPSRDNNKCYAKIICNLKDDERVVGFHVLGPNAGEVTQGFAAALKCGLTKQQLDSTIGIHPVCAEIFTTLSVTKRSGGDILQSGCUG</sequence>
<gene>
    <name evidence="10" type="primary">Txnrd1</name>
    <name type="synonym">Trxr1</name>
</gene>